<protein>
    <recommendedName>
        <fullName evidence="1">Argininosuccinate lyase</fullName>
        <shortName evidence="1">ASAL</shortName>
        <ecNumber evidence="1">4.3.2.1</ecNumber>
    </recommendedName>
    <alternativeName>
        <fullName evidence="1">Arginosuccinase</fullName>
    </alternativeName>
</protein>
<evidence type="ECO:0000255" key="1">
    <source>
        <dbReference type="HAMAP-Rule" id="MF_00006"/>
    </source>
</evidence>
<name>ARLY_CERS4</name>
<accession>Q3IZY2</accession>
<keyword id="KW-0028">Amino-acid biosynthesis</keyword>
<keyword id="KW-0055">Arginine biosynthesis</keyword>
<keyword id="KW-0963">Cytoplasm</keyword>
<keyword id="KW-0456">Lyase</keyword>
<keyword id="KW-1185">Reference proteome</keyword>
<dbReference type="EC" id="4.3.2.1" evidence="1"/>
<dbReference type="EMBL" id="CP000143">
    <property type="protein sequence ID" value="ABA79902.1"/>
    <property type="molecule type" value="Genomic_DNA"/>
</dbReference>
<dbReference type="RefSeq" id="WP_011338440.1">
    <property type="nucleotide sequence ID" value="NC_007493.2"/>
</dbReference>
<dbReference type="RefSeq" id="YP_353803.1">
    <property type="nucleotide sequence ID" value="NC_007493.2"/>
</dbReference>
<dbReference type="SMR" id="Q3IZY2"/>
<dbReference type="STRING" id="272943.RSP_0726"/>
<dbReference type="EnsemblBacteria" id="ABA79902">
    <property type="protein sequence ID" value="ABA79902"/>
    <property type="gene ID" value="RSP_0726"/>
</dbReference>
<dbReference type="GeneID" id="3718090"/>
<dbReference type="KEGG" id="rsp:RSP_0726"/>
<dbReference type="PATRIC" id="fig|272943.9.peg.2679"/>
<dbReference type="eggNOG" id="COG0165">
    <property type="taxonomic scope" value="Bacteria"/>
</dbReference>
<dbReference type="OrthoDB" id="9769623at2"/>
<dbReference type="PhylomeDB" id="Q3IZY2"/>
<dbReference type="UniPathway" id="UPA00068">
    <property type="reaction ID" value="UER00114"/>
</dbReference>
<dbReference type="Proteomes" id="UP000002703">
    <property type="component" value="Chromosome 1"/>
</dbReference>
<dbReference type="GO" id="GO:0005829">
    <property type="term" value="C:cytosol"/>
    <property type="evidence" value="ECO:0007669"/>
    <property type="project" value="TreeGrafter"/>
</dbReference>
<dbReference type="GO" id="GO:0004056">
    <property type="term" value="F:argininosuccinate lyase activity"/>
    <property type="evidence" value="ECO:0007669"/>
    <property type="project" value="UniProtKB-UniRule"/>
</dbReference>
<dbReference type="GO" id="GO:0042450">
    <property type="term" value="P:arginine biosynthetic process via ornithine"/>
    <property type="evidence" value="ECO:0007669"/>
    <property type="project" value="InterPro"/>
</dbReference>
<dbReference type="GO" id="GO:0006526">
    <property type="term" value="P:L-arginine biosynthetic process"/>
    <property type="evidence" value="ECO:0007669"/>
    <property type="project" value="UniProtKB-UniRule"/>
</dbReference>
<dbReference type="CDD" id="cd01359">
    <property type="entry name" value="Argininosuccinate_lyase"/>
    <property type="match status" value="1"/>
</dbReference>
<dbReference type="FunFam" id="1.10.275.10:FF:000002">
    <property type="entry name" value="Argininosuccinate lyase"/>
    <property type="match status" value="1"/>
</dbReference>
<dbReference type="FunFam" id="1.10.40.30:FF:000001">
    <property type="entry name" value="Argininosuccinate lyase"/>
    <property type="match status" value="1"/>
</dbReference>
<dbReference type="FunFam" id="1.20.200.10:FF:000015">
    <property type="entry name" value="argininosuccinate lyase isoform X2"/>
    <property type="match status" value="1"/>
</dbReference>
<dbReference type="Gene3D" id="1.10.40.30">
    <property type="entry name" value="Fumarase/aspartase (C-terminal domain)"/>
    <property type="match status" value="1"/>
</dbReference>
<dbReference type="Gene3D" id="1.20.200.10">
    <property type="entry name" value="Fumarase/aspartase (Central domain)"/>
    <property type="match status" value="1"/>
</dbReference>
<dbReference type="Gene3D" id="1.10.275.10">
    <property type="entry name" value="Fumarase/aspartase (N-terminal domain)"/>
    <property type="match status" value="1"/>
</dbReference>
<dbReference type="HAMAP" id="MF_00006">
    <property type="entry name" value="Arg_succ_lyase"/>
    <property type="match status" value="1"/>
</dbReference>
<dbReference type="InterPro" id="IPR029419">
    <property type="entry name" value="Arg_succ_lyase_C"/>
</dbReference>
<dbReference type="InterPro" id="IPR009049">
    <property type="entry name" value="Argininosuccinate_lyase"/>
</dbReference>
<dbReference type="InterPro" id="IPR024083">
    <property type="entry name" value="Fumarase/histidase_N"/>
</dbReference>
<dbReference type="InterPro" id="IPR020557">
    <property type="entry name" value="Fumarate_lyase_CS"/>
</dbReference>
<dbReference type="InterPro" id="IPR000362">
    <property type="entry name" value="Fumarate_lyase_fam"/>
</dbReference>
<dbReference type="InterPro" id="IPR022761">
    <property type="entry name" value="Fumarate_lyase_N"/>
</dbReference>
<dbReference type="InterPro" id="IPR008948">
    <property type="entry name" value="L-Aspartase-like"/>
</dbReference>
<dbReference type="NCBIfam" id="TIGR00838">
    <property type="entry name" value="argH"/>
    <property type="match status" value="1"/>
</dbReference>
<dbReference type="PANTHER" id="PTHR43814">
    <property type="entry name" value="ARGININOSUCCINATE LYASE"/>
    <property type="match status" value="1"/>
</dbReference>
<dbReference type="PANTHER" id="PTHR43814:SF1">
    <property type="entry name" value="ARGININOSUCCINATE LYASE"/>
    <property type="match status" value="1"/>
</dbReference>
<dbReference type="Pfam" id="PF14698">
    <property type="entry name" value="ASL_C2"/>
    <property type="match status" value="1"/>
</dbReference>
<dbReference type="Pfam" id="PF00206">
    <property type="entry name" value="Lyase_1"/>
    <property type="match status" value="1"/>
</dbReference>
<dbReference type="PRINTS" id="PR00145">
    <property type="entry name" value="ARGSUCLYASE"/>
</dbReference>
<dbReference type="PRINTS" id="PR00149">
    <property type="entry name" value="FUMRATELYASE"/>
</dbReference>
<dbReference type="SUPFAM" id="SSF48557">
    <property type="entry name" value="L-aspartase-like"/>
    <property type="match status" value="1"/>
</dbReference>
<dbReference type="PROSITE" id="PS00163">
    <property type="entry name" value="FUMARATE_LYASES"/>
    <property type="match status" value="1"/>
</dbReference>
<proteinExistence type="inferred from homology"/>
<sequence>MSDAPDPSSAANTMWGGRFAAGPDAIMQAINASIGFDKRLYAQDIRGSRAHAAMLAAQGILTSRDAEAIGEGLLTVLSEIEAGGFPFRVELEDIHMNVEARLKELIGEPAGRLHTARSRNDQVAVDFRLWVRDQCDAAISGIEALMRAFLAQAEAGADWVMPGFTHLQTAQPVTWGHHMLAYVEMLARDRSRFVDARARMNECPLGAAALAGTGFPIDRHMTAAALGFDRPTANSLDSVSDRDFALEFLSASAICALHLSRFAEELVIWSSAQFRFVRLSDRWTTGSSIMPQKKNPDAAELLRAKMGRVLGAAVALFTVMKGLPLTYSKDMQEDKEQVFDAADTLMLGLAAMTGMVGDMQANRESLAAAAASGFSTATDLADWLVRELNLPFRDAHHVTGTLVARAEARGCDLPDLSLAEMQEVHPGIREDVFAVLGVENSVRSRTSYGGTAPDNVRAQAARWKELLGDAA</sequence>
<feature type="chain" id="PRO_0000240760" description="Argininosuccinate lyase">
    <location>
        <begin position="1"/>
        <end position="471"/>
    </location>
</feature>
<reference key="1">
    <citation type="submission" date="2005-09" db="EMBL/GenBank/DDBJ databases">
        <title>Complete sequence of chromosome 1 of Rhodobacter sphaeroides 2.4.1.</title>
        <authorList>
            <person name="Copeland A."/>
            <person name="Lucas S."/>
            <person name="Lapidus A."/>
            <person name="Barry K."/>
            <person name="Detter J.C."/>
            <person name="Glavina T."/>
            <person name="Hammon N."/>
            <person name="Israni S."/>
            <person name="Pitluck S."/>
            <person name="Richardson P."/>
            <person name="Mackenzie C."/>
            <person name="Choudhary M."/>
            <person name="Larimer F."/>
            <person name="Hauser L.J."/>
            <person name="Land M."/>
            <person name="Donohue T.J."/>
            <person name="Kaplan S."/>
        </authorList>
    </citation>
    <scope>NUCLEOTIDE SEQUENCE [LARGE SCALE GENOMIC DNA]</scope>
    <source>
        <strain>ATCC 17023 / DSM 158 / JCM 6121 / CCUG 31486 / LMG 2827 / NBRC 12203 / NCIMB 8253 / ATH 2.4.1.</strain>
    </source>
</reference>
<organism>
    <name type="scientific">Cereibacter sphaeroides (strain ATCC 17023 / DSM 158 / JCM 6121 / CCUG 31486 / LMG 2827 / NBRC 12203 / NCIMB 8253 / ATH 2.4.1.)</name>
    <name type="common">Rhodobacter sphaeroides</name>
    <dbReference type="NCBI Taxonomy" id="272943"/>
    <lineage>
        <taxon>Bacteria</taxon>
        <taxon>Pseudomonadati</taxon>
        <taxon>Pseudomonadota</taxon>
        <taxon>Alphaproteobacteria</taxon>
        <taxon>Rhodobacterales</taxon>
        <taxon>Paracoccaceae</taxon>
        <taxon>Cereibacter</taxon>
    </lineage>
</organism>
<gene>
    <name evidence="1" type="primary">argH</name>
    <name type="ordered locus">RHOS4_23340</name>
    <name type="ORF">RSP_0726</name>
</gene>
<comment type="catalytic activity">
    <reaction evidence="1">
        <text>2-(N(omega)-L-arginino)succinate = fumarate + L-arginine</text>
        <dbReference type="Rhea" id="RHEA:24020"/>
        <dbReference type="ChEBI" id="CHEBI:29806"/>
        <dbReference type="ChEBI" id="CHEBI:32682"/>
        <dbReference type="ChEBI" id="CHEBI:57472"/>
        <dbReference type="EC" id="4.3.2.1"/>
    </reaction>
</comment>
<comment type="pathway">
    <text evidence="1">Amino-acid biosynthesis; L-arginine biosynthesis; L-arginine from L-ornithine and carbamoyl phosphate: step 3/3.</text>
</comment>
<comment type="subcellular location">
    <subcellularLocation>
        <location evidence="1">Cytoplasm</location>
    </subcellularLocation>
</comment>
<comment type="similarity">
    <text evidence="1">Belongs to the lyase 1 family. Argininosuccinate lyase subfamily.</text>
</comment>